<accession>Q93113</accession>
<accession>Q7PH24</accession>
<accession>Q94998</accession>
<sequence>MDFYYLPGSAPCRAVQMTAAAVGVELNLKLTDLMKGEHMKPEFLKLNPQHCIPTLVDNGFALWESRAIQIYLAEKYGKDDKLYPKDPQKRAVVNQRLYFDMGTLYQRFADYHYPQIFAKQPANPENEKKMKDAVGFLNTFLEGQEYAAGNDLTIADLSLAATIATYEVAGFDFAPYPNVAAWFARCKANAPGYALNQAGADEFKAKFLS</sequence>
<proteinExistence type="evidence at protein level"/>
<feature type="chain" id="PRO_0000185962" description="Glutathione S-transferase 1, isoform D">
    <location>
        <begin position="1"/>
        <end position="209"/>
    </location>
</feature>
<feature type="domain" description="GST N-terminal">
    <location>
        <begin position="1"/>
        <end position="80"/>
    </location>
</feature>
<feature type="domain" description="GST C-terminal">
    <location>
        <begin position="86"/>
        <end position="207"/>
    </location>
</feature>
<feature type="binding site">
    <location>
        <position position="9"/>
    </location>
    <ligand>
        <name>glutathione</name>
        <dbReference type="ChEBI" id="CHEBI:57925"/>
    </ligand>
</feature>
<feature type="binding site">
    <location>
        <begin position="50"/>
        <end position="52"/>
    </location>
    <ligand>
        <name>glutathione</name>
        <dbReference type="ChEBI" id="CHEBI:57925"/>
    </ligand>
</feature>
<feature type="binding site">
    <location>
        <begin position="64"/>
        <end position="66"/>
    </location>
    <ligand>
        <name>glutathione</name>
        <dbReference type="ChEBI" id="CHEBI:57925"/>
    </ligand>
</feature>
<feature type="sequence conflict" description="In Ref. 1; CAA96105." evidence="4" ref="1">
    <original>V</original>
    <variation>A</variation>
    <location>
        <position position="24"/>
    </location>
</feature>
<feature type="strand" evidence="5">
    <location>
        <begin position="2"/>
        <end position="5"/>
    </location>
</feature>
<feature type="helix" evidence="5">
    <location>
        <begin position="10"/>
        <end position="21"/>
    </location>
</feature>
<feature type="strand" evidence="5">
    <location>
        <begin position="27"/>
        <end position="30"/>
    </location>
</feature>
<feature type="helix" evidence="5">
    <location>
        <begin position="33"/>
        <end position="35"/>
    </location>
</feature>
<feature type="helix" evidence="5">
    <location>
        <begin position="37"/>
        <end position="39"/>
    </location>
</feature>
<feature type="helix" evidence="5">
    <location>
        <begin position="41"/>
        <end position="46"/>
    </location>
</feature>
<feature type="strand" evidence="5">
    <location>
        <begin position="52"/>
        <end position="57"/>
    </location>
</feature>
<feature type="strand" evidence="5">
    <location>
        <begin position="60"/>
        <end position="64"/>
    </location>
</feature>
<feature type="helix" evidence="5">
    <location>
        <begin position="65"/>
        <end position="76"/>
    </location>
</feature>
<feature type="helix" evidence="5">
    <location>
        <begin position="87"/>
        <end position="102"/>
    </location>
</feature>
<feature type="helix" evidence="5">
    <location>
        <begin position="104"/>
        <end position="118"/>
    </location>
</feature>
<feature type="helix" evidence="5">
    <location>
        <begin position="124"/>
        <end position="140"/>
    </location>
</feature>
<feature type="turn" evidence="5">
    <location>
        <begin position="141"/>
        <end position="143"/>
    </location>
</feature>
<feature type="strand" evidence="5">
    <location>
        <begin position="149"/>
        <end position="151"/>
    </location>
</feature>
<feature type="helix" evidence="5">
    <location>
        <begin position="154"/>
        <end position="169"/>
    </location>
</feature>
<feature type="helix" evidence="5">
    <location>
        <begin position="177"/>
        <end position="189"/>
    </location>
</feature>
<feature type="helix" evidence="5">
    <location>
        <begin position="193"/>
        <end position="207"/>
    </location>
</feature>
<name>GST1D_ANOGA</name>
<keyword id="KW-0002">3D-structure</keyword>
<keyword id="KW-0025">Alternative splicing</keyword>
<keyword id="KW-0456">Lyase</keyword>
<keyword id="KW-1185">Reference proteome</keyword>
<keyword id="KW-0808">Transferase</keyword>
<comment type="function">
    <text evidence="2 3">Conjugation of reduced glutathione to a wide number of exogenous and endogenous hydrophobic electrophiles. Has DDT dehydrochlorinase activity.</text>
</comment>
<comment type="catalytic activity">
    <reaction evidence="3">
        <text>RX + glutathione = an S-substituted glutathione + a halide anion + H(+)</text>
        <dbReference type="Rhea" id="RHEA:16437"/>
        <dbReference type="ChEBI" id="CHEBI:15378"/>
        <dbReference type="ChEBI" id="CHEBI:16042"/>
        <dbReference type="ChEBI" id="CHEBI:17792"/>
        <dbReference type="ChEBI" id="CHEBI:57925"/>
        <dbReference type="ChEBI" id="CHEBI:90779"/>
        <dbReference type="EC" id="2.5.1.18"/>
    </reaction>
</comment>
<comment type="catalytic activity">
    <reaction evidence="3">
        <text>1,1,1-trichloro-2,2-bis(4-chlorophenyl)ethane = 1,1-dichloro-2,2-bis(4-chlorophenyl)ethylene + chloride + H(+)</text>
        <dbReference type="Rhea" id="RHEA:19217"/>
        <dbReference type="ChEBI" id="CHEBI:15378"/>
        <dbReference type="ChEBI" id="CHEBI:16130"/>
        <dbReference type="ChEBI" id="CHEBI:16598"/>
        <dbReference type="ChEBI" id="CHEBI:17996"/>
        <dbReference type="EC" id="4.5.1.1"/>
    </reaction>
</comment>
<comment type="activity regulation">
    <text evidence="1">Inhibited by S-hexylglutathione.</text>
</comment>
<comment type="subunit">
    <text evidence="1">Homodimer.</text>
</comment>
<comment type="alternative products">
    <event type="alternative splicing"/>
    <isoform>
        <id>Q93113-1</id>
        <name>D</name>
        <name>1-1</name>
        <name>1-6</name>
        <name>2-1</name>
        <sequence type="displayed"/>
    </isoform>
    <isoform>
        <id>O77462-1</id>
        <name>A</name>
        <name>1-3</name>
        <sequence type="external"/>
    </isoform>
    <isoform>
        <id>O77473-1</id>
        <name>B</name>
        <name>1-4</name>
        <sequence type="external"/>
    </isoform>
    <isoform>
        <id>Q93112-1</id>
        <name>C</name>
        <name>1-5</name>
        <sequence type="external"/>
    </isoform>
</comment>
<comment type="developmental stage">
    <text evidence="2">Expressed in larvae.</text>
</comment>
<comment type="similarity">
    <text evidence="4">Belongs to the GST superfamily. Theta family.</text>
</comment>
<evidence type="ECO:0000269" key="1">
    <source>
    </source>
</evidence>
<evidence type="ECO:0000269" key="2">
    <source>
    </source>
</evidence>
<evidence type="ECO:0000269" key="3">
    <source>
    </source>
</evidence>
<evidence type="ECO:0000305" key="4"/>
<evidence type="ECO:0007829" key="5">
    <source>
        <dbReference type="PDB" id="1PN9"/>
    </source>
</evidence>
<gene>
    <name type="primary">GstD1</name>
    <name type="synonym">GST1a</name>
    <name type="ORF">AGAP004164</name>
</gene>
<protein>
    <recommendedName>
        <fullName>Glutathione S-transferase 1, isoform D</fullName>
        <ecNumber>2.5.1.18</ecNumber>
        <ecNumber>4.5.1.1</ecNumber>
    </recommendedName>
    <alternativeName>
        <fullName>AgGst1-alpha</fullName>
    </alternativeName>
    <alternativeName>
        <fullName>Aggst1-1</fullName>
    </alternativeName>
    <alternativeName>
        <fullName>Aggst1-6</fullName>
    </alternativeName>
    <alternativeName>
        <fullName>Aggst2-1</fullName>
    </alternativeName>
    <alternativeName>
        <fullName>DDT-dehydrochlorinase</fullName>
    </alternativeName>
    <alternativeName>
        <fullName>GST class-theta</fullName>
    </alternativeName>
</protein>
<dbReference type="EC" id="2.5.1.18"/>
<dbReference type="EC" id="4.5.1.1"/>
<dbReference type="EMBL" id="Z71481">
    <property type="protein sequence ID" value="CAA96105.1"/>
    <property type="molecule type" value="mRNA"/>
</dbReference>
<dbReference type="EMBL" id="Z81292">
    <property type="protein sequence ID" value="CAB03593.1"/>
    <property type="molecule type" value="mRNA"/>
</dbReference>
<dbReference type="EMBL" id="AF071160">
    <property type="protein sequence ID" value="AAC79995.1"/>
    <property type="molecule type" value="Genomic_DNA"/>
</dbReference>
<dbReference type="EMBL" id="AAAB01008880">
    <property type="protein sequence ID" value="EAA44713.3"/>
    <property type="molecule type" value="Genomic_DNA"/>
</dbReference>
<dbReference type="RefSeq" id="XP_313050.3">
    <molecule id="Q93113-1"/>
    <property type="nucleotide sequence ID" value="XM_313050.4"/>
</dbReference>
<dbReference type="PDB" id="1PN9">
    <property type="method" value="X-ray"/>
    <property type="resolution" value="2.00 A"/>
    <property type="chains" value="A/B=1-209"/>
</dbReference>
<dbReference type="PDBsum" id="1PN9"/>
<dbReference type="SMR" id="Q93113"/>
<dbReference type="FunCoup" id="Q93113">
    <property type="interactions" value="627"/>
</dbReference>
<dbReference type="STRING" id="7165.Q93113"/>
<dbReference type="EnsemblMetazoa" id="AGAP004164-RB">
    <molecule id="Q93113-1"/>
    <property type="protein sequence ID" value="AGAP004164-PB"/>
    <property type="gene ID" value="AGAP004164"/>
</dbReference>
<dbReference type="GeneID" id="1273988"/>
<dbReference type="VEuPathDB" id="VectorBase:AGAMI1_006046"/>
<dbReference type="VEuPathDB" id="VectorBase:AGAP004164"/>
<dbReference type="HOGENOM" id="CLU_011226_2_1_1"/>
<dbReference type="InParanoid" id="Q93113"/>
<dbReference type="BRENDA" id="2.5.1.18">
    <property type="organism ID" value="358"/>
</dbReference>
<dbReference type="EvolutionaryTrace" id="Q93113"/>
<dbReference type="Proteomes" id="UP000007062">
    <property type="component" value="Chromosome 2R"/>
</dbReference>
<dbReference type="GO" id="GO:0018833">
    <property type="term" value="F:DDT-dehydrochlorinase activity"/>
    <property type="evidence" value="ECO:0007669"/>
    <property type="project" value="UniProtKB-EC"/>
</dbReference>
<dbReference type="GO" id="GO:0004364">
    <property type="term" value="F:glutathione transferase activity"/>
    <property type="evidence" value="ECO:0000318"/>
    <property type="project" value="GO_Central"/>
</dbReference>
<dbReference type="GO" id="GO:0006749">
    <property type="term" value="P:glutathione metabolic process"/>
    <property type="evidence" value="ECO:0000318"/>
    <property type="project" value="GO_Central"/>
</dbReference>
<dbReference type="CDD" id="cd03177">
    <property type="entry name" value="GST_C_Delta_Epsilon"/>
    <property type="match status" value="1"/>
</dbReference>
<dbReference type="CDD" id="cd03045">
    <property type="entry name" value="GST_N_Delta_Epsilon"/>
    <property type="match status" value="1"/>
</dbReference>
<dbReference type="FunFam" id="3.40.30.10:FF:000034">
    <property type="entry name" value="glutathione S-transferase 1"/>
    <property type="match status" value="1"/>
</dbReference>
<dbReference type="FunFam" id="1.20.1050.10:FF:000007">
    <property type="entry name" value="Glutathione S-transferase 1-1"/>
    <property type="match status" value="1"/>
</dbReference>
<dbReference type="Gene3D" id="1.20.1050.10">
    <property type="match status" value="1"/>
</dbReference>
<dbReference type="Gene3D" id="3.40.30.10">
    <property type="entry name" value="Glutaredoxin"/>
    <property type="match status" value="1"/>
</dbReference>
<dbReference type="InterPro" id="IPR010987">
    <property type="entry name" value="Glutathione-S-Trfase_C-like"/>
</dbReference>
<dbReference type="InterPro" id="IPR036282">
    <property type="entry name" value="Glutathione-S-Trfase_C_sf"/>
</dbReference>
<dbReference type="InterPro" id="IPR040079">
    <property type="entry name" value="Glutathione_S-Trfase"/>
</dbReference>
<dbReference type="InterPro" id="IPR004045">
    <property type="entry name" value="Glutathione_S-Trfase_N"/>
</dbReference>
<dbReference type="InterPro" id="IPR004046">
    <property type="entry name" value="GST_C"/>
</dbReference>
<dbReference type="InterPro" id="IPR036249">
    <property type="entry name" value="Thioredoxin-like_sf"/>
</dbReference>
<dbReference type="PANTHER" id="PTHR43969">
    <property type="entry name" value="GLUTATHIONE S TRANSFERASE D10, ISOFORM A-RELATED"/>
    <property type="match status" value="1"/>
</dbReference>
<dbReference type="PANTHER" id="PTHR43969:SF9">
    <property type="entry name" value="GLUTATHIONE S TRANSFERASE D10, ISOFORM A-RELATED"/>
    <property type="match status" value="1"/>
</dbReference>
<dbReference type="Pfam" id="PF00043">
    <property type="entry name" value="GST_C"/>
    <property type="match status" value="1"/>
</dbReference>
<dbReference type="Pfam" id="PF02798">
    <property type="entry name" value="GST_N"/>
    <property type="match status" value="1"/>
</dbReference>
<dbReference type="SFLD" id="SFLDS00019">
    <property type="entry name" value="Glutathione_Transferase_(cytos"/>
    <property type="match status" value="1"/>
</dbReference>
<dbReference type="SFLD" id="SFLDG01153">
    <property type="entry name" value="Main.4:_Theta-like"/>
    <property type="match status" value="1"/>
</dbReference>
<dbReference type="SUPFAM" id="SSF47616">
    <property type="entry name" value="GST C-terminal domain-like"/>
    <property type="match status" value="1"/>
</dbReference>
<dbReference type="SUPFAM" id="SSF52833">
    <property type="entry name" value="Thioredoxin-like"/>
    <property type="match status" value="1"/>
</dbReference>
<dbReference type="PROSITE" id="PS50405">
    <property type="entry name" value="GST_CTER"/>
    <property type="match status" value="1"/>
</dbReference>
<dbReference type="PROSITE" id="PS50404">
    <property type="entry name" value="GST_NTER"/>
    <property type="match status" value="1"/>
</dbReference>
<organism>
    <name type="scientific">Anopheles gambiae</name>
    <name type="common">African malaria mosquito</name>
    <dbReference type="NCBI Taxonomy" id="7165"/>
    <lineage>
        <taxon>Eukaryota</taxon>
        <taxon>Metazoa</taxon>
        <taxon>Ecdysozoa</taxon>
        <taxon>Arthropoda</taxon>
        <taxon>Hexapoda</taxon>
        <taxon>Insecta</taxon>
        <taxon>Pterygota</taxon>
        <taxon>Neoptera</taxon>
        <taxon>Endopterygota</taxon>
        <taxon>Diptera</taxon>
        <taxon>Nematocera</taxon>
        <taxon>Culicoidea</taxon>
        <taxon>Culicidae</taxon>
        <taxon>Anophelinae</taxon>
        <taxon>Anopheles</taxon>
    </lineage>
</organism>
<reference key="1">
    <citation type="journal article" date="1997" name="J. Biol. Chem.">
        <title>Cloning and localization of a glutathione S-transferase class I gene from Anopheles gambiae.</title>
        <authorList>
            <person name="Ranson H."/>
            <person name="Cornel A.J."/>
            <person name="Fournier D."/>
            <person name="Vaughan A."/>
            <person name="Collins F.H."/>
            <person name="Hemingway J."/>
        </authorList>
    </citation>
    <scope>NUCLEOTIDE SEQUENCE [MRNA]</scope>
    <scope>FUNCTION</scope>
    <scope>DEVELOPMENTAL STAGE</scope>
    <source>
        <strain>G3</strain>
        <strain>Zands</strain>
        <tissue>Larva</tissue>
    </source>
</reference>
<reference key="2">
    <citation type="journal article" date="1998" name="Proc. Natl. Acad. Sci. U.S.A.">
        <title>The role of alternative mRNA splicing in generating heterogeneity within the Anopheles gambiae class I glutathione S-transferase family.</title>
        <authorList>
            <person name="Ranson H."/>
            <person name="Collins F.H."/>
            <person name="Hemingway J."/>
        </authorList>
    </citation>
    <scope>NUCLEOTIDE SEQUENCE [GENOMIC DNA]</scope>
    <scope>ALTERNATIVE SPLICING</scope>
    <source>
        <strain>ZAN/U</strain>
    </source>
</reference>
<reference key="3">
    <citation type="journal article" date="2002" name="Science">
        <title>The genome sequence of the malaria mosquito Anopheles gambiae.</title>
        <authorList>
            <person name="Holt R.A."/>
            <person name="Subramanian G.M."/>
            <person name="Halpern A."/>
            <person name="Sutton G.G."/>
            <person name="Charlab R."/>
            <person name="Nusskern D.R."/>
            <person name="Wincker P."/>
            <person name="Clark A.G."/>
            <person name="Ribeiro J.M.C."/>
            <person name="Wides R."/>
            <person name="Salzberg S.L."/>
            <person name="Loftus B.J."/>
            <person name="Yandell M.D."/>
            <person name="Majoros W.H."/>
            <person name="Rusch D.B."/>
            <person name="Lai Z."/>
            <person name="Kraft C.L."/>
            <person name="Abril J.F."/>
            <person name="Anthouard V."/>
            <person name="Arensburger P."/>
            <person name="Atkinson P.W."/>
            <person name="Baden H."/>
            <person name="de Berardinis V."/>
            <person name="Baldwin D."/>
            <person name="Benes V."/>
            <person name="Biedler J."/>
            <person name="Blass C."/>
            <person name="Bolanos R."/>
            <person name="Boscus D."/>
            <person name="Barnstead M."/>
            <person name="Cai S."/>
            <person name="Center A."/>
            <person name="Chaturverdi K."/>
            <person name="Christophides G.K."/>
            <person name="Chrystal M.A.M."/>
            <person name="Clamp M."/>
            <person name="Cravchik A."/>
            <person name="Curwen V."/>
            <person name="Dana A."/>
            <person name="Delcher A."/>
            <person name="Dew I."/>
            <person name="Evans C.A."/>
            <person name="Flanigan M."/>
            <person name="Grundschober-Freimoser A."/>
            <person name="Friedli L."/>
            <person name="Gu Z."/>
            <person name="Guan P."/>
            <person name="Guigo R."/>
            <person name="Hillenmeyer M.E."/>
            <person name="Hladun S.L."/>
            <person name="Hogan J.R."/>
            <person name="Hong Y.S."/>
            <person name="Hoover J."/>
            <person name="Jaillon O."/>
            <person name="Ke Z."/>
            <person name="Kodira C.D."/>
            <person name="Kokoza E."/>
            <person name="Koutsos A."/>
            <person name="Letunic I."/>
            <person name="Levitsky A.A."/>
            <person name="Liang Y."/>
            <person name="Lin J.-J."/>
            <person name="Lobo N.F."/>
            <person name="Lopez J.R."/>
            <person name="Malek J.A."/>
            <person name="McIntosh T.C."/>
            <person name="Meister S."/>
            <person name="Miller J.R."/>
            <person name="Mobarry C."/>
            <person name="Mongin E."/>
            <person name="Murphy S.D."/>
            <person name="O'Brochta D.A."/>
            <person name="Pfannkoch C."/>
            <person name="Qi R."/>
            <person name="Regier M.A."/>
            <person name="Remington K."/>
            <person name="Shao H."/>
            <person name="Sharakhova M.V."/>
            <person name="Sitter C.D."/>
            <person name="Shetty J."/>
            <person name="Smith T.J."/>
            <person name="Strong R."/>
            <person name="Sun J."/>
            <person name="Thomasova D."/>
            <person name="Ton L.Q."/>
            <person name="Topalis P."/>
            <person name="Tu Z.J."/>
            <person name="Unger M.F."/>
            <person name="Walenz B."/>
            <person name="Wang A.H."/>
            <person name="Wang J."/>
            <person name="Wang M."/>
            <person name="Wang X."/>
            <person name="Woodford K.J."/>
            <person name="Wortman J.R."/>
            <person name="Wu M."/>
            <person name="Yao A."/>
            <person name="Zdobnov E.M."/>
            <person name="Zhang H."/>
            <person name="Zhao Q."/>
            <person name="Zhao S."/>
            <person name="Zhu S.C."/>
            <person name="Zhimulev I."/>
            <person name="Coluzzi M."/>
            <person name="della Torre A."/>
            <person name="Roth C.W."/>
            <person name="Louis C."/>
            <person name="Kalush F."/>
            <person name="Mural R.J."/>
            <person name="Myers E.W."/>
            <person name="Adams M.D."/>
            <person name="Smith H.O."/>
            <person name="Broder S."/>
            <person name="Gardner M.J."/>
            <person name="Fraser C.M."/>
            <person name="Birney E."/>
            <person name="Bork P."/>
            <person name="Brey P.T."/>
            <person name="Venter J.C."/>
            <person name="Weissenbach J."/>
            <person name="Kafatos F.C."/>
            <person name="Collins F.H."/>
            <person name="Hoffman S.L."/>
        </authorList>
    </citation>
    <scope>NUCLEOTIDE SEQUENCE [LARGE SCALE GENOMIC DNA]</scope>
    <source>
        <strain>PEST</strain>
    </source>
</reference>
<reference key="4">
    <citation type="journal article" date="1997" name="Biochem. J.">
        <title>Cloning and characterization of two glutathione S-transferases from a DDT-resistant strain of Anopheles gambiae.</title>
        <authorList>
            <person name="Ranson H."/>
            <person name="Prapanthadara L."/>
            <person name="Hemingway J."/>
        </authorList>
    </citation>
    <scope>FUNCTION</scope>
    <scope>CATALYTIC ACTIVITY</scope>
    <source>
        <strain>Zands</strain>
    </source>
</reference>
<reference key="5">
    <citation type="journal article" date="2003" name="Acta Crystallogr. D">
        <title>Structure of an insect delta-class glutathione S-transferase from a DDT-resistant strain of the malaria vector Anopheles gambiae.</title>
        <authorList>
            <person name="Chen L."/>
            <person name="Hall P.R."/>
            <person name="Zhou X.E."/>
            <person name="Ranson H."/>
            <person name="Hemingway J."/>
            <person name="Meehan E.J."/>
        </authorList>
    </citation>
    <scope>X-RAY CRYSTALLOGRAPHY (2.0 ANGSTROMS) IN COMPLEX WITH S-HEXYLGLUTATHIONE INHIBITOR</scope>
    <scope>ACTIVITY REGULATION</scope>
    <scope>SUBUNIT</scope>
</reference>